<organism>
    <name type="scientific">Mycobacterium tuberculosis (strain ATCC 25618 / H37Rv)</name>
    <dbReference type="NCBI Taxonomy" id="83332"/>
    <lineage>
        <taxon>Bacteria</taxon>
        <taxon>Bacillati</taxon>
        <taxon>Actinomycetota</taxon>
        <taxon>Actinomycetes</taxon>
        <taxon>Mycobacteriales</taxon>
        <taxon>Mycobacteriaceae</taxon>
        <taxon>Mycobacterium</taxon>
        <taxon>Mycobacterium tuberculosis complex</taxon>
    </lineage>
</organism>
<reference key="1">
    <citation type="journal article" date="1998" name="Nature">
        <title>Deciphering the biology of Mycobacterium tuberculosis from the complete genome sequence.</title>
        <authorList>
            <person name="Cole S.T."/>
            <person name="Brosch R."/>
            <person name="Parkhill J."/>
            <person name="Garnier T."/>
            <person name="Churcher C.M."/>
            <person name="Harris D.E."/>
            <person name="Gordon S.V."/>
            <person name="Eiglmeier K."/>
            <person name="Gas S."/>
            <person name="Barry C.E. III"/>
            <person name="Tekaia F."/>
            <person name="Badcock K."/>
            <person name="Basham D."/>
            <person name="Brown D."/>
            <person name="Chillingworth T."/>
            <person name="Connor R."/>
            <person name="Davies R.M."/>
            <person name="Devlin K."/>
            <person name="Feltwell T."/>
            <person name="Gentles S."/>
            <person name="Hamlin N."/>
            <person name="Holroyd S."/>
            <person name="Hornsby T."/>
            <person name="Jagels K."/>
            <person name="Krogh A."/>
            <person name="McLean J."/>
            <person name="Moule S."/>
            <person name="Murphy L.D."/>
            <person name="Oliver S."/>
            <person name="Osborne J."/>
            <person name="Quail M.A."/>
            <person name="Rajandream M.A."/>
            <person name="Rogers J."/>
            <person name="Rutter S."/>
            <person name="Seeger K."/>
            <person name="Skelton S."/>
            <person name="Squares S."/>
            <person name="Squares R."/>
            <person name="Sulston J.E."/>
            <person name="Taylor K."/>
            <person name="Whitehead S."/>
            <person name="Barrell B.G."/>
        </authorList>
    </citation>
    <scope>NUCLEOTIDE SEQUENCE [LARGE SCALE GENOMIC DNA]</scope>
    <source>
        <strain>ATCC 25618 / H37Rv</strain>
    </source>
</reference>
<reference key="2">
    <citation type="journal article" date="2010" name="PLoS ONE">
        <title>Prokaryotic ubiquitin-like protein (Pup) proteome of Mycobacterium tuberculosis.</title>
        <authorList>
            <person name="Festa R.A."/>
            <person name="McAllister F."/>
            <person name="Pearce M.J."/>
            <person name="Mintseris J."/>
            <person name="Burns K.E."/>
            <person name="Gygi S.P."/>
            <person name="Darwin K.H."/>
        </authorList>
    </citation>
    <scope>PUPYLATION AT LYS-29</scope>
    <scope>IDENTIFICATION BY MASS SPECTROMETRY</scope>
    <source>
        <strain>ATCC 25618 / H37Rv</strain>
    </source>
</reference>
<reference key="3">
    <citation type="journal article" date="2010" name="PLoS ONE">
        <title>Mycobacterium tuberculosis phosphoribosylpyrophosphate synthetase: biochemical features of a crucial enzyme for mycobacterial cell wall biosynthesis.</title>
        <authorList>
            <person name="Lucarelli A.P."/>
            <person name="Buroni S."/>
            <person name="Pasca M.R."/>
            <person name="Rizzi M."/>
            <person name="Cavagnino A."/>
            <person name="Valentini G."/>
            <person name="Riccardi G."/>
            <person name="Chiarelli L.R."/>
        </authorList>
    </citation>
    <scope>FUNCTION</scope>
    <scope>CATALYTIC ACTIVITY</scope>
    <scope>BIOPHYSICOCHEMICAL PROPERTIES</scope>
    <scope>ACTIVITY REGULATION</scope>
    <scope>COFACTOR</scope>
    <scope>SUBUNIT</scope>
</reference>
<reference key="4">
    <citation type="journal article" date="2011" name="Glycobiology">
        <title>Biochemical characterization of the Mycobacterium tuberculosis phosphoribosyl-1-pyrophosphate synthetase.</title>
        <authorList>
            <person name="Alderwick L.J."/>
            <person name="Lloyd G.S."/>
            <person name="Lloyd A.J."/>
            <person name="Lovering A.L."/>
            <person name="Eggeling L."/>
            <person name="Besra G.S."/>
        </authorList>
    </citation>
    <scope>FUNCTION</scope>
    <scope>CATALYTIC ACTIVITY</scope>
    <scope>BIOPHYSICOCHEMICAL PROPERTIES</scope>
    <scope>COFACTOR</scope>
    <scope>ACTIVITY REGULATION</scope>
    <scope>PATHWAY</scope>
    <scope>SUBUNIT</scope>
</reference>
<reference key="5">
    <citation type="journal article" date="2011" name="Mol. Cell. Proteomics">
        <title>Proteogenomic analysis of Mycobacterium tuberculosis by high resolution mass spectrometry.</title>
        <authorList>
            <person name="Kelkar D.S."/>
            <person name="Kumar D."/>
            <person name="Kumar P."/>
            <person name="Balakrishnan L."/>
            <person name="Muthusamy B."/>
            <person name="Yadav A.K."/>
            <person name="Shrivastava P."/>
            <person name="Marimuthu A."/>
            <person name="Anand S."/>
            <person name="Sundaram H."/>
            <person name="Kingsbury R."/>
            <person name="Harsha H.C."/>
            <person name="Nair B."/>
            <person name="Prasad T.S."/>
            <person name="Chauhan D.S."/>
            <person name="Katoch K."/>
            <person name="Katoch V.M."/>
            <person name="Kumar P."/>
            <person name="Chaerkady R."/>
            <person name="Ramachandran S."/>
            <person name="Dash D."/>
            <person name="Pandey A."/>
        </authorList>
    </citation>
    <scope>IDENTIFICATION BY MASS SPECTROMETRY [LARGE SCALE ANALYSIS]</scope>
    <source>
        <strain>ATCC 25618 / H37Rv</strain>
    </source>
</reference>
<reference key="6">
    <citation type="journal article" date="2012" name="PLoS ONE">
        <title>Wild-type phosphoribosylpyrophosphate synthase (PRS) from Mycobacterium tuberculosis: a bacterial class II PRS?</title>
        <authorList>
            <person name="Breda A."/>
            <person name="Martinelli L.K."/>
            <person name="Bizarro C.V."/>
            <person name="Rosado L.A."/>
            <person name="Borges C.B."/>
            <person name="Santos D.S."/>
            <person name="Basso L.A."/>
        </authorList>
    </citation>
    <scope>FUNCTION</scope>
    <scope>CATALYTIC ACTIVITY</scope>
    <scope>BIOPHYSICOCHEMICAL PROPERTIES</scope>
    <scope>ACTIVITY REGULATION</scope>
    <scope>SUBSTRATE SPECIFICITY</scope>
    <scope>SUBUNIT</scope>
</reference>
<reference key="7">
    <citation type="journal article" date="2017" name="Microbiol. Mol. Biol. Rev.">
        <title>Phosphoribosyl diphosphate (PRPP): biosynthesis, enzymology, utilization, and metabolic significance.</title>
        <authorList>
            <person name="Hove-Jensen B."/>
            <person name="Andersen K.R."/>
            <person name="Kilstrup M."/>
            <person name="Martinussen J."/>
            <person name="Switzer R.L."/>
            <person name="Willemoes M."/>
        </authorList>
    </citation>
    <scope>REVIEW</scope>
</reference>
<protein>
    <recommendedName>
        <fullName evidence="1">Ribose-phosphate pyrophosphokinase</fullName>
        <shortName evidence="1">RPPK</shortName>
        <ecNumber evidence="1 3 4 5">2.7.6.1</ecNumber>
    </recommendedName>
    <alternativeName>
        <fullName evidence="1">5-phospho-D-ribosyl alpha-1-diphosphate synthase</fullName>
    </alternativeName>
    <alternativeName>
        <fullName evidence="1">Phosphoribosyl diphosphate synthase</fullName>
    </alternativeName>
    <alternativeName>
        <fullName evidence="1 6">Phosphoribosyl pyrophosphate synthase</fullName>
        <shortName evidence="1">P-Rib-PP synthase</shortName>
        <shortName evidence="1 6">PRPP synthase</shortName>
        <shortName evidence="1 6">PRPPase</shortName>
    </alternativeName>
</protein>
<accession>P9WKE3</accession>
<accession>L0T8D7</accession>
<accession>P65232</accession>
<accession>P96383</accession>
<sequence>MSHDWTDNRKNLMLFAGRAHPELAEQVAKELDVHVTSQDAREFANGEIFVRFHESVRGCDAFVLQSCPAPVNRWLMEQLIMIDALKRGSAKRITAVMPFYPYARQDKKHRGREPISARLIADLLKTAGADRIVTVDLHTDQIQGFFDGPVDHMRGQNLLTGYIRDNYPDGNMVVVSPDSGRVRIAEKWADALGGVPLAFIHKTRDPRVPNQVVSNRVVGDVAGRTCVLIDDMIDTGGTIAGAVALLHNDGAGDVIIAATHGVLSDPAAQRLASCGAREVIVTNTLPIGEDKRFPQLTVLSIAPLLASTIRAVFENGSVTGLFDGDA</sequence>
<gene>
    <name evidence="1" type="primary">prs</name>
    <name evidence="8" type="synonym">prsA</name>
    <name type="ordered locus">Rv1017c</name>
    <name type="ORF">MTCY10G2.32</name>
</gene>
<proteinExistence type="evidence at protein level"/>
<name>KPRS_MYCTU</name>
<keyword id="KW-0021">Allosteric enzyme</keyword>
<keyword id="KW-0067">ATP-binding</keyword>
<keyword id="KW-0961">Cell wall biogenesis/degradation</keyword>
<keyword id="KW-0963">Cytoplasm</keyword>
<keyword id="KW-1017">Isopeptide bond</keyword>
<keyword id="KW-0418">Kinase</keyword>
<keyword id="KW-0460">Magnesium</keyword>
<keyword id="KW-0464">Manganese</keyword>
<keyword id="KW-0479">Metal-binding</keyword>
<keyword id="KW-0545">Nucleotide biosynthesis</keyword>
<keyword id="KW-0547">Nucleotide-binding</keyword>
<keyword id="KW-1185">Reference proteome</keyword>
<keyword id="KW-0808">Transferase</keyword>
<keyword id="KW-0832">Ubl conjugation</keyword>
<comment type="function">
    <text evidence="3 4 5">Involved in the biosynthesis of the central metabolite phospho-alpha-D-ribosyl-1-pyrophosphate (PRPP) and of the decaprenylphosphoryl-arabinose (DPA), an essential precursor for the mycobacterial cell wall biosynthesis. Catalyzes the transfer of pyrophosphoryl group from ATP to 1-hydroxyl of ribose-5-phosphate (Rib-5-P) to yield phosphoribosyl diphosphate (PRPP) and AMP. It can also use GTP, CTP and UTP as diphosphoryl donors (PubMed:22745722).</text>
</comment>
<comment type="catalytic activity">
    <reaction evidence="1 3 4 5">
        <text>D-ribose 5-phosphate + ATP = 5-phospho-alpha-D-ribose 1-diphosphate + AMP + H(+)</text>
        <dbReference type="Rhea" id="RHEA:15609"/>
        <dbReference type="ChEBI" id="CHEBI:15378"/>
        <dbReference type="ChEBI" id="CHEBI:30616"/>
        <dbReference type="ChEBI" id="CHEBI:58017"/>
        <dbReference type="ChEBI" id="CHEBI:78346"/>
        <dbReference type="ChEBI" id="CHEBI:456215"/>
        <dbReference type="EC" id="2.7.6.1"/>
    </reaction>
</comment>
<comment type="cofactor">
    <cofactor evidence="1 3 4">
        <name>Mg(2+)</name>
        <dbReference type="ChEBI" id="CHEBI:18420"/>
    </cofactor>
    <text evidence="1 3 4">Binds 2 Mg(2+) ions per subunit (Potential). Can also use Mn(2+) (PubMed:21045009, PubMed:21085589).</text>
</comment>
<comment type="activity regulation">
    <text evidence="3 4 5">Activated by inorganic phosphate, and to a lesser extent by sulfate ions (PubMed:21045009, PubMed:21085589). In addition to form a complex with ATP, Mg(2+) also acts as a cofactor (PubMed:21045009, PubMed:21085589). Strongly inhibited by ADP and GDP through competitive binding at the activation site and at a specific allosteric site (PubMed:21045009, PubMed:21085589, PubMed:22745722). Competitively inhibited by Ca(2+), Cu(2+) and Fe(2+) (PubMed:21045009, PubMed:21085589).</text>
</comment>
<comment type="biophysicochemical properties">
    <kinetics>
        <KM evidence="3">8.2 uM for Rib-5-P</KM>
        <KM evidence="5">14 uM for Rib-5-P</KM>
        <KM evidence="5">25 uM for ATP</KM>
        <KM evidence="5">26 uM for CTP</KM>
        <KM evidence="5">37 uM for GTP</KM>
        <KM evidence="5">52 uM for UTP</KM>
        <KM evidence="4">70 uM for Rib-5-P (without divalent cation)</KM>
        <Vmax evidence="3">601.0 umol/min/mg enzyme with ATP as substrate</Vmax>
        <Vmax evidence="3">530.0 umol/min/mg enzyme with Rib-5-P as substrate</Vmax>
        <Vmax evidence="5">1.41 umol/min/mg enzyme with Rib-5-P as substrate</Vmax>
        <Vmax evidence="5">1.12 umol/min/mg enzyme with ATP as substrate</Vmax>
        <Vmax evidence="5">0.264 umol/min/mg enzyme with UTP as substrate</Vmax>
        <Vmax evidence="5">0.237 umol/min/mg enzyme with GTP as substrate</Vmax>
        <Vmax evidence="5">0.237 umol/min/mg enzyme with CTP as substrate</Vmax>
        <text evidence="4 5">kcat is 37 sec(-1) with Rib-5-P as substrate (PubMed:21085589). kcat is 0.83 sec(-1) with Rib-5-P as substrate (PubMed:22745722). kcat is 0.66 sec(-1) with ATP as substrate (PubMed:22745722). kcat is 0.155 sec(-1) with UTP as substrate (PubMed:22745722). kcat is 0.140 sec(-1) with GTP as substrate (PubMed:22745722). kcat is 0.065 sec(-1) with CTP as substrate (PubMed:22745722).</text>
    </kinetics>
    <phDependence>
        <text evidence="3 4">Optimum pH is close to 8 (PubMed:21085589). Activities at pH 7 and pH 9.5 are 57% and 70% of the maximal activity, respectively (PubMed:21045009, PubMed:21085589).</text>
    </phDependence>
    <temperatureDependence>
        <text evidence="4">Thermostable.</text>
    </temperatureDependence>
</comment>
<comment type="pathway">
    <text evidence="1 9">Metabolic intermediate biosynthesis; 5-phospho-alpha-D-ribose 1-diphosphate biosynthesis; 5-phospho-alpha-D-ribose 1-diphosphate from D-ribose 5-phosphate (route I): step 1/1.</text>
</comment>
<comment type="pathway">
    <text evidence="3">Cell wall biogenesis; cell wall polysaccharide biosynthesis.</text>
</comment>
<comment type="subunit">
    <text evidence="4 5 9">Homohexamer.</text>
</comment>
<comment type="subcellular location">
    <subcellularLocation>
        <location evidence="1">Cytoplasm</location>
    </subcellularLocation>
</comment>
<comment type="similarity">
    <text evidence="1 7">Belongs to the ribose-phosphate pyrophosphokinase family. Class I subfamily.</text>
</comment>
<dbReference type="EC" id="2.7.6.1" evidence="1 3 4 5"/>
<dbReference type="EMBL" id="AL123456">
    <property type="protein sequence ID" value="CCP43767.1"/>
    <property type="molecule type" value="Genomic_DNA"/>
</dbReference>
<dbReference type="PIR" id="D70622">
    <property type="entry name" value="D70622"/>
</dbReference>
<dbReference type="RefSeq" id="NP_215533.1">
    <property type="nucleotide sequence ID" value="NC_000962.3"/>
</dbReference>
<dbReference type="RefSeq" id="WP_003405263.1">
    <property type="nucleotide sequence ID" value="NZ_NVQJ01000018.1"/>
</dbReference>
<dbReference type="SMR" id="P9WKE3"/>
<dbReference type="FunCoup" id="P9WKE3">
    <property type="interactions" value="552"/>
</dbReference>
<dbReference type="STRING" id="83332.Rv1017c"/>
<dbReference type="PaxDb" id="83332-Rv1017c"/>
<dbReference type="DNASU" id="885993"/>
<dbReference type="GeneID" id="885993"/>
<dbReference type="KEGG" id="mtu:Rv1017c"/>
<dbReference type="KEGG" id="mtv:RVBD_1017c"/>
<dbReference type="TubercuList" id="Rv1017c"/>
<dbReference type="eggNOG" id="COG0462">
    <property type="taxonomic scope" value="Bacteria"/>
</dbReference>
<dbReference type="InParanoid" id="P9WKE3"/>
<dbReference type="OrthoDB" id="9777067at2"/>
<dbReference type="PhylomeDB" id="P9WKE3"/>
<dbReference type="SABIO-RK" id="P9WKE3"/>
<dbReference type="UniPathway" id="UPA00087">
    <property type="reaction ID" value="UER00172"/>
</dbReference>
<dbReference type="UniPathway" id="UPA00963"/>
<dbReference type="Proteomes" id="UP000001584">
    <property type="component" value="Chromosome"/>
</dbReference>
<dbReference type="GO" id="GO:0005737">
    <property type="term" value="C:cytoplasm"/>
    <property type="evidence" value="ECO:0000318"/>
    <property type="project" value="GO_Central"/>
</dbReference>
<dbReference type="GO" id="GO:0009274">
    <property type="term" value="C:peptidoglycan-based cell wall"/>
    <property type="evidence" value="ECO:0007005"/>
    <property type="project" value="MTBBASE"/>
</dbReference>
<dbReference type="GO" id="GO:0005886">
    <property type="term" value="C:plasma membrane"/>
    <property type="evidence" value="ECO:0007005"/>
    <property type="project" value="MTBBASE"/>
</dbReference>
<dbReference type="GO" id="GO:0002189">
    <property type="term" value="C:ribose phosphate diphosphokinase complex"/>
    <property type="evidence" value="ECO:0000318"/>
    <property type="project" value="GO_Central"/>
</dbReference>
<dbReference type="GO" id="GO:0005524">
    <property type="term" value="F:ATP binding"/>
    <property type="evidence" value="ECO:0007669"/>
    <property type="project" value="UniProtKB-KW"/>
</dbReference>
<dbReference type="GO" id="GO:0016301">
    <property type="term" value="F:kinase activity"/>
    <property type="evidence" value="ECO:0007669"/>
    <property type="project" value="UniProtKB-KW"/>
</dbReference>
<dbReference type="GO" id="GO:0000287">
    <property type="term" value="F:magnesium ion binding"/>
    <property type="evidence" value="ECO:0000314"/>
    <property type="project" value="MTBBASE"/>
</dbReference>
<dbReference type="GO" id="GO:0030145">
    <property type="term" value="F:manganese ion binding"/>
    <property type="evidence" value="ECO:0000314"/>
    <property type="project" value="MTBBASE"/>
</dbReference>
<dbReference type="GO" id="GO:0004749">
    <property type="term" value="F:ribose phosphate diphosphokinase activity"/>
    <property type="evidence" value="ECO:0000314"/>
    <property type="project" value="MTBBASE"/>
</dbReference>
<dbReference type="GO" id="GO:0006015">
    <property type="term" value="P:5-phosphoribose 1-diphosphate biosynthetic process"/>
    <property type="evidence" value="ECO:0000314"/>
    <property type="project" value="MTBBASE"/>
</dbReference>
<dbReference type="GO" id="GO:0045227">
    <property type="term" value="P:capsule polysaccharide biosynthetic process"/>
    <property type="evidence" value="ECO:0007669"/>
    <property type="project" value="UniProtKB-UniPathway"/>
</dbReference>
<dbReference type="GO" id="GO:0071555">
    <property type="term" value="P:cell wall organization"/>
    <property type="evidence" value="ECO:0007669"/>
    <property type="project" value="UniProtKB-KW"/>
</dbReference>
<dbReference type="GO" id="GO:0006164">
    <property type="term" value="P:purine nucleotide biosynthetic process"/>
    <property type="evidence" value="ECO:0000318"/>
    <property type="project" value="GO_Central"/>
</dbReference>
<dbReference type="GO" id="GO:0009156">
    <property type="term" value="P:ribonucleoside monophosphate biosynthetic process"/>
    <property type="evidence" value="ECO:0007669"/>
    <property type="project" value="InterPro"/>
</dbReference>
<dbReference type="CDD" id="cd06223">
    <property type="entry name" value="PRTases_typeI"/>
    <property type="match status" value="1"/>
</dbReference>
<dbReference type="FunFam" id="3.40.50.2020:FF:000007">
    <property type="entry name" value="Ribose-phosphate pyrophosphokinase"/>
    <property type="match status" value="1"/>
</dbReference>
<dbReference type="Gene3D" id="3.40.50.2020">
    <property type="match status" value="2"/>
</dbReference>
<dbReference type="HAMAP" id="MF_00583_B">
    <property type="entry name" value="RibP_PPkinase_B"/>
    <property type="match status" value="1"/>
</dbReference>
<dbReference type="InterPro" id="IPR000842">
    <property type="entry name" value="PRib_PP_synth_CS"/>
</dbReference>
<dbReference type="InterPro" id="IPR029099">
    <property type="entry name" value="Pribosyltran_N"/>
</dbReference>
<dbReference type="InterPro" id="IPR000836">
    <property type="entry name" value="PRibTrfase_dom"/>
</dbReference>
<dbReference type="InterPro" id="IPR029057">
    <property type="entry name" value="PRTase-like"/>
</dbReference>
<dbReference type="InterPro" id="IPR005946">
    <property type="entry name" value="Rib-P_diPkinase"/>
</dbReference>
<dbReference type="InterPro" id="IPR037515">
    <property type="entry name" value="Rib-P_diPkinase_bac"/>
</dbReference>
<dbReference type="NCBIfam" id="NF002320">
    <property type="entry name" value="PRK01259.1"/>
    <property type="match status" value="1"/>
</dbReference>
<dbReference type="NCBIfam" id="NF002844">
    <property type="entry name" value="PRK03092.1"/>
    <property type="match status" value="1"/>
</dbReference>
<dbReference type="NCBIfam" id="TIGR01251">
    <property type="entry name" value="ribP_PPkin"/>
    <property type="match status" value="1"/>
</dbReference>
<dbReference type="PANTHER" id="PTHR10210">
    <property type="entry name" value="RIBOSE-PHOSPHATE DIPHOSPHOKINASE FAMILY MEMBER"/>
    <property type="match status" value="1"/>
</dbReference>
<dbReference type="PANTHER" id="PTHR10210:SF41">
    <property type="entry name" value="RIBOSE-PHOSPHATE PYROPHOSPHOKINASE 1, CHLOROPLASTIC"/>
    <property type="match status" value="1"/>
</dbReference>
<dbReference type="Pfam" id="PF14572">
    <property type="entry name" value="Pribosyl_synth"/>
    <property type="match status" value="1"/>
</dbReference>
<dbReference type="Pfam" id="PF13793">
    <property type="entry name" value="Pribosyltran_N"/>
    <property type="match status" value="1"/>
</dbReference>
<dbReference type="SMART" id="SM01400">
    <property type="entry name" value="Pribosyltran_N"/>
    <property type="match status" value="1"/>
</dbReference>
<dbReference type="SUPFAM" id="SSF53271">
    <property type="entry name" value="PRTase-like"/>
    <property type="match status" value="1"/>
</dbReference>
<dbReference type="PROSITE" id="PS00114">
    <property type="entry name" value="PRPP_SYNTHASE"/>
    <property type="match status" value="1"/>
</dbReference>
<feature type="chain" id="PRO_0000141164" description="Ribose-phosphate pyrophosphokinase">
    <location>
        <begin position="1"/>
        <end position="326"/>
    </location>
</feature>
<feature type="active site" evidence="1">
    <location>
        <position position="202"/>
    </location>
</feature>
<feature type="binding site" evidence="1">
    <location>
        <begin position="45"/>
        <end position="47"/>
    </location>
    <ligand>
        <name>ATP</name>
        <dbReference type="ChEBI" id="CHEBI:30616"/>
    </ligand>
</feature>
<feature type="binding site" evidence="1">
    <location>
        <begin position="104"/>
        <end position="105"/>
    </location>
    <ligand>
        <name>ATP</name>
        <dbReference type="ChEBI" id="CHEBI:30616"/>
    </ligand>
</feature>
<feature type="binding site" evidence="1">
    <location>
        <position position="138"/>
    </location>
    <ligand>
        <name>Mg(2+)</name>
        <dbReference type="ChEBI" id="CHEBI:18420"/>
        <label>1</label>
    </ligand>
</feature>
<feature type="binding site" evidence="1">
    <location>
        <position position="178"/>
    </location>
    <ligand>
        <name>Mg(2+)</name>
        <dbReference type="ChEBI" id="CHEBI:18420"/>
        <label>2</label>
    </ligand>
</feature>
<feature type="binding site" evidence="1">
    <location>
        <position position="204"/>
    </location>
    <ligand>
        <name>D-ribose 5-phosphate</name>
        <dbReference type="ChEBI" id="CHEBI:78346"/>
    </ligand>
</feature>
<feature type="binding site" evidence="1">
    <location>
        <position position="230"/>
    </location>
    <ligand>
        <name>D-ribose 5-phosphate</name>
        <dbReference type="ChEBI" id="CHEBI:78346"/>
    </ligand>
</feature>
<feature type="binding site" evidence="1">
    <location>
        <begin position="234"/>
        <end position="238"/>
    </location>
    <ligand>
        <name>D-ribose 5-phosphate</name>
        <dbReference type="ChEBI" id="CHEBI:78346"/>
    </ligand>
</feature>
<feature type="cross-link" description="Isoglutamyl lysine isopeptide (Lys-Gln) (interchain with Q-Cter in protein Pup)" evidence="2">
    <location>
        <position position="29"/>
    </location>
</feature>
<evidence type="ECO:0000255" key="1">
    <source>
        <dbReference type="HAMAP-Rule" id="MF_00583"/>
    </source>
</evidence>
<evidence type="ECO:0000269" key="2">
    <source>
    </source>
</evidence>
<evidence type="ECO:0000269" key="3">
    <source>
    </source>
</evidence>
<evidence type="ECO:0000269" key="4">
    <source>
    </source>
</evidence>
<evidence type="ECO:0000269" key="5">
    <source>
    </source>
</evidence>
<evidence type="ECO:0000303" key="6">
    <source>
    </source>
</evidence>
<evidence type="ECO:0000303" key="7">
    <source>
    </source>
</evidence>
<evidence type="ECO:0000303" key="8">
    <source>
    </source>
</evidence>
<evidence type="ECO:0000305" key="9">
    <source>
    </source>
</evidence>